<reference key="1">
    <citation type="journal article" date="2009" name="BMC Genomics">
        <title>The complete genome sequence of Staphylothermus marinus reveals differences in sulfur metabolism among heterotrophic Crenarchaeota.</title>
        <authorList>
            <person name="Anderson I.J."/>
            <person name="Dharmarajan L."/>
            <person name="Rodriguez J."/>
            <person name="Hooper S."/>
            <person name="Porat I."/>
            <person name="Ulrich L.E."/>
            <person name="Elkins J.G."/>
            <person name="Mavromatis K."/>
            <person name="Sun H."/>
            <person name="Land M."/>
            <person name="Lapidus A."/>
            <person name="Lucas S."/>
            <person name="Barry K."/>
            <person name="Huber H."/>
            <person name="Zhulin I.B."/>
            <person name="Whitman W.B."/>
            <person name="Mukhopadhyay B."/>
            <person name="Woese C."/>
            <person name="Bristow J."/>
            <person name="Kyrpides N."/>
        </authorList>
    </citation>
    <scope>NUCLEOTIDE SEQUENCE [LARGE SCALE GENOMIC DNA]</scope>
    <source>
        <strain>ATCC 43588 / DSM 3639 / JCM 9404 / F1</strain>
    </source>
</reference>
<reference key="2">
    <citation type="journal article" date="2009" name="Stand. Genomic Sci.">
        <title>Complete genome sequence of Staphylothermus marinus Stetter and Fiala 1986 type strain F1.</title>
        <authorList>
            <person name="Anderson I.J."/>
            <person name="Sun H."/>
            <person name="Lapidus A."/>
            <person name="Copeland A."/>
            <person name="Glavina Del Rio T."/>
            <person name="Tice H."/>
            <person name="Dalin E."/>
            <person name="Lucas S."/>
            <person name="Barry K."/>
            <person name="Land M."/>
            <person name="Richardson P."/>
            <person name="Huber H."/>
            <person name="Kyrpides N.C."/>
        </authorList>
    </citation>
    <scope>NUCLEOTIDE SEQUENCE [LARGE SCALE GENOMIC DNA]</scope>
    <source>
        <strain>ATCC 43588 / DSM 3639 / JCM 9404 / F1</strain>
    </source>
</reference>
<evidence type="ECO:0000255" key="1">
    <source>
        <dbReference type="HAMAP-Rule" id="MF_02113"/>
    </source>
</evidence>
<dbReference type="EC" id="3.4.25.1" evidence="1"/>
<dbReference type="EMBL" id="CP000575">
    <property type="protein sequence ID" value="ABN70037.1"/>
    <property type="molecule type" value="Genomic_DNA"/>
</dbReference>
<dbReference type="SMR" id="A3DN27"/>
<dbReference type="STRING" id="399550.Smar_0938"/>
<dbReference type="MEROPS" id="T01.002"/>
<dbReference type="KEGG" id="smr:Smar_0938"/>
<dbReference type="eggNOG" id="arCOG00970">
    <property type="taxonomic scope" value="Archaea"/>
</dbReference>
<dbReference type="HOGENOM" id="CLU_035750_7_2_2"/>
<dbReference type="Proteomes" id="UP000000254">
    <property type="component" value="Chromosome"/>
</dbReference>
<dbReference type="GO" id="GO:0005737">
    <property type="term" value="C:cytoplasm"/>
    <property type="evidence" value="ECO:0007669"/>
    <property type="project" value="UniProtKB-SubCell"/>
</dbReference>
<dbReference type="GO" id="GO:0019774">
    <property type="term" value="C:proteasome core complex, beta-subunit complex"/>
    <property type="evidence" value="ECO:0007669"/>
    <property type="project" value="UniProtKB-UniRule"/>
</dbReference>
<dbReference type="GO" id="GO:0004298">
    <property type="term" value="F:threonine-type endopeptidase activity"/>
    <property type="evidence" value="ECO:0007669"/>
    <property type="project" value="UniProtKB-UniRule"/>
</dbReference>
<dbReference type="GO" id="GO:0010498">
    <property type="term" value="P:proteasomal protein catabolic process"/>
    <property type="evidence" value="ECO:0007669"/>
    <property type="project" value="UniProtKB-UniRule"/>
</dbReference>
<dbReference type="Gene3D" id="3.60.20.10">
    <property type="entry name" value="Glutamine Phosphoribosylpyrophosphate, subunit 1, domain 1"/>
    <property type="match status" value="1"/>
</dbReference>
<dbReference type="HAMAP" id="MF_02113_A">
    <property type="entry name" value="Proteasome_B_A"/>
    <property type="match status" value="1"/>
</dbReference>
<dbReference type="InterPro" id="IPR029055">
    <property type="entry name" value="Ntn_hydrolases_N"/>
</dbReference>
<dbReference type="InterPro" id="IPR019983">
    <property type="entry name" value="Pept_T1A_Psome_bsu_arc"/>
</dbReference>
<dbReference type="InterPro" id="IPR000243">
    <property type="entry name" value="Pept_T1A_subB"/>
</dbReference>
<dbReference type="InterPro" id="IPR016050">
    <property type="entry name" value="Proteasome_bsu_CS"/>
</dbReference>
<dbReference type="InterPro" id="IPR001353">
    <property type="entry name" value="Proteasome_sua/b"/>
</dbReference>
<dbReference type="InterPro" id="IPR023333">
    <property type="entry name" value="Proteasome_suB-type"/>
</dbReference>
<dbReference type="NCBIfam" id="TIGR03634">
    <property type="entry name" value="arc_protsome_B"/>
    <property type="match status" value="1"/>
</dbReference>
<dbReference type="PANTHER" id="PTHR32194:SF0">
    <property type="entry name" value="ATP-DEPENDENT PROTEASE SUBUNIT HSLV"/>
    <property type="match status" value="1"/>
</dbReference>
<dbReference type="PANTHER" id="PTHR32194">
    <property type="entry name" value="METALLOPROTEASE TLDD"/>
    <property type="match status" value="1"/>
</dbReference>
<dbReference type="Pfam" id="PF00227">
    <property type="entry name" value="Proteasome"/>
    <property type="match status" value="1"/>
</dbReference>
<dbReference type="PRINTS" id="PR00141">
    <property type="entry name" value="PROTEASOME"/>
</dbReference>
<dbReference type="SUPFAM" id="SSF56235">
    <property type="entry name" value="N-terminal nucleophile aminohydrolases (Ntn hydrolases)"/>
    <property type="match status" value="1"/>
</dbReference>
<dbReference type="PROSITE" id="PS00854">
    <property type="entry name" value="PROTEASOME_BETA_1"/>
    <property type="match status" value="1"/>
</dbReference>
<dbReference type="PROSITE" id="PS51476">
    <property type="entry name" value="PROTEASOME_BETA_2"/>
    <property type="match status" value="1"/>
</dbReference>
<gene>
    <name evidence="1" type="primary">psmB2</name>
    <name type="ordered locus">Smar_0938</name>
</gene>
<feature type="propeptide" id="PRO_0000397420" description="Removed in mature form; by autocatalysis" evidence="1">
    <location>
        <begin position="1"/>
        <end position="9"/>
    </location>
</feature>
<feature type="chain" id="PRO_0000397421" description="Proteasome subunit beta 2">
    <location>
        <begin position="10"/>
        <end position="208"/>
    </location>
</feature>
<feature type="active site" description="Nucleophile" evidence="1">
    <location>
        <position position="10"/>
    </location>
</feature>
<comment type="function">
    <text evidence="1">Component of the proteasome core, a large protease complex with broad specificity involved in protein degradation.</text>
</comment>
<comment type="catalytic activity">
    <reaction evidence="1">
        <text>Cleavage of peptide bonds with very broad specificity.</text>
        <dbReference type="EC" id="3.4.25.1"/>
    </reaction>
</comment>
<comment type="activity regulation">
    <text evidence="1">The formation of the proteasomal ATPase PAN-20S proteasome complex, via the docking of the C-termini of PAN into the intersubunit pockets in the alpha-rings, triggers opening of the gate for substrate entry. Interconversion between the open-gate and close-gate conformations leads to a dynamic regulation of the 20S proteasome proteolysis activity.</text>
</comment>
<comment type="subunit">
    <text evidence="1">The 20S proteasome core is composed of 14 alpha and 14 beta subunits that assemble into four stacked heptameric rings, resulting in a barrel-shaped structure. The two inner rings, each composed of seven catalytic beta subunits, are sandwiched by two outer rings, each composed of seven alpha subunits. The catalytic chamber with the active sites is on the inside of the barrel. Has a gated structure, the ends of the cylinder being occluded by the N-termini of the alpha-subunits. Is capped at one or both ends by the proteasome regulatory ATPase, PAN.</text>
</comment>
<comment type="subcellular location">
    <subcellularLocation>
        <location evidence="1">Cytoplasm</location>
    </subcellularLocation>
</comment>
<comment type="similarity">
    <text evidence="1">Belongs to the peptidase T1B family.</text>
</comment>
<protein>
    <recommendedName>
        <fullName evidence="1">Proteasome subunit beta 2</fullName>
        <ecNumber evidence="1">3.4.25.1</ecNumber>
    </recommendedName>
    <alternativeName>
        <fullName evidence="1">20S proteasome beta subunit 2</fullName>
    </alternativeName>
    <alternativeName>
        <fullName evidence="1">Proteasome core protein PsmB 2</fullName>
    </alternativeName>
</protein>
<accession>A3DN27</accession>
<sequence>MSGKKIVSKTTTVGIVVGDYVVLAADKRATAGSLVAHKRVKKIIRIDDYIAMTISGLVADAEIIAEQARFIARKYKLELGRPIKVSALASNLSIILNAYLRMSPYIVQLLLGGYDDNGPHLFYIDLFGSLSEEKYMATGSGSPTAFGVLEEEYRSDLSLDEAKELAFKAVSAATKRDGFSGEGVDIVVIGPNTYVEETKLFKRSIIAK</sequence>
<name>PSB2_STAMF</name>
<organism>
    <name type="scientific">Staphylothermus marinus (strain ATCC 43588 / DSM 3639 / JCM 9404 / F1)</name>
    <dbReference type="NCBI Taxonomy" id="399550"/>
    <lineage>
        <taxon>Archaea</taxon>
        <taxon>Thermoproteota</taxon>
        <taxon>Thermoprotei</taxon>
        <taxon>Desulfurococcales</taxon>
        <taxon>Desulfurococcaceae</taxon>
        <taxon>Staphylothermus</taxon>
    </lineage>
</organism>
<proteinExistence type="inferred from homology"/>
<keyword id="KW-0068">Autocatalytic cleavage</keyword>
<keyword id="KW-0963">Cytoplasm</keyword>
<keyword id="KW-0378">Hydrolase</keyword>
<keyword id="KW-0645">Protease</keyword>
<keyword id="KW-0647">Proteasome</keyword>
<keyword id="KW-1185">Reference proteome</keyword>
<keyword id="KW-0888">Threonine protease</keyword>
<keyword id="KW-0865">Zymogen</keyword>